<accession>B3LUU7</accession>
<protein>
    <recommendedName>
        <fullName evidence="1">Mitochondrial distribution and morphology protein 10</fullName>
    </recommendedName>
    <alternativeName>
        <fullName evidence="1">Mitochondrial inheritance component MDM10</fullName>
    </alternativeName>
</protein>
<sequence length="493" mass="56282">MLPYMDQVLRAFYQSTHWSTQNSYEDITATSRTLLDFRIPSAIHLQISNKSTPNTFNSLDFSTRSRINGSLSYLYSDAQQLENFMRNSTDIPLQDATETYRQLQPNLNFSVSSGNTLSSDNTTVDNDKKLLHDSKFVKKSLYYGRMYYPSSDLEAMIIKRLNPQTQFMLKGVSSFKESLNVLTCYFQRDSHRNLQEWIFSTSDLLCGYRVLHNFLTTPSKFNTSLYNNSSLSLGAEFWLGLVSLSPGCSTTLRYYTHSTNTGRPLTLTLSWNPLFGHISSTYSAKTGTNSTFCAKYDFNLYSIESNLSFGCEFWQKKHHLLETNKNNNDKLEPISDELVDINSNSRATKLLHENVPDLNLAVNDIPSTLDIPVHKQKLLNDLTYAFSSSLRKIDEERSTIEKFDNKINSSIFTSVWKLSTSLRDKTLKLLWEGKWRGFLISAGTELVFTRGFQESLSDDEKNDNAISISATDTENGNIPVFPTKFGIQFQYST</sequence>
<evidence type="ECO:0000255" key="1">
    <source>
        <dbReference type="HAMAP-Rule" id="MF_03102"/>
    </source>
</evidence>
<proteinExistence type="inferred from homology"/>
<name>MDM10_YEAS1</name>
<reference key="1">
    <citation type="submission" date="2005-03" db="EMBL/GenBank/DDBJ databases">
        <title>Annotation of the Saccharomyces cerevisiae RM11-1a genome.</title>
        <authorList>
            <consortium name="The Broad Institute Genome Sequencing Platform"/>
            <person name="Birren B.W."/>
            <person name="Lander E.S."/>
            <person name="Galagan J.E."/>
            <person name="Nusbaum C."/>
            <person name="Devon K."/>
            <person name="Cuomo C."/>
            <person name="Jaffe D.B."/>
            <person name="Butler J."/>
            <person name="Alvarez P."/>
            <person name="Gnerre S."/>
            <person name="Grabherr M."/>
            <person name="Kleber M."/>
            <person name="Mauceli E.W."/>
            <person name="Brockman W."/>
            <person name="MacCallum I.A."/>
            <person name="Rounsley S."/>
            <person name="Young S.K."/>
            <person name="LaButti K."/>
            <person name="Pushparaj V."/>
            <person name="DeCaprio D."/>
            <person name="Crawford M."/>
            <person name="Koehrsen M."/>
            <person name="Engels R."/>
            <person name="Montgomery P."/>
            <person name="Pearson M."/>
            <person name="Howarth C."/>
            <person name="Larson L."/>
            <person name="Luoma S."/>
            <person name="White J."/>
            <person name="O'Leary S."/>
            <person name="Kodira C.D."/>
            <person name="Zeng Q."/>
            <person name="Yandava C."/>
            <person name="Alvarado L."/>
            <person name="Pratt S."/>
            <person name="Kruglyak L."/>
        </authorList>
    </citation>
    <scope>NUCLEOTIDE SEQUENCE [LARGE SCALE GENOMIC DNA]</scope>
    <source>
        <strain>RM11-1a</strain>
    </source>
</reference>
<feature type="chain" id="PRO_0000384198" description="Mitochondrial distribution and morphology protein 10">
    <location>
        <begin position="1"/>
        <end position="493"/>
    </location>
</feature>
<dbReference type="EMBL" id="CH408058">
    <property type="protein sequence ID" value="EDV09928.1"/>
    <property type="molecule type" value="Genomic_DNA"/>
</dbReference>
<dbReference type="SMR" id="B3LUU7"/>
<dbReference type="HOGENOM" id="CLU_026505_0_0_1"/>
<dbReference type="OrthoDB" id="18705at4893"/>
<dbReference type="Proteomes" id="UP000008335">
    <property type="component" value="Unassembled WGS sequence"/>
</dbReference>
<dbReference type="GO" id="GO:0032865">
    <property type="term" value="C:ERMES complex"/>
    <property type="evidence" value="ECO:0007669"/>
    <property type="project" value="UniProtKB-UniRule"/>
</dbReference>
<dbReference type="GO" id="GO:0001401">
    <property type="term" value="C:SAM complex"/>
    <property type="evidence" value="ECO:0007669"/>
    <property type="project" value="TreeGrafter"/>
</dbReference>
<dbReference type="GO" id="GO:0051654">
    <property type="term" value="P:establishment of mitochondrion localization"/>
    <property type="evidence" value="ECO:0007669"/>
    <property type="project" value="TreeGrafter"/>
</dbReference>
<dbReference type="GO" id="GO:0000002">
    <property type="term" value="P:mitochondrial genome maintenance"/>
    <property type="evidence" value="ECO:0007669"/>
    <property type="project" value="UniProtKB-UniRule"/>
</dbReference>
<dbReference type="GO" id="GO:0070096">
    <property type="term" value="P:mitochondrial outer membrane translocase complex assembly"/>
    <property type="evidence" value="ECO:0007669"/>
    <property type="project" value="UniProtKB-UniRule"/>
</dbReference>
<dbReference type="GO" id="GO:1990456">
    <property type="term" value="P:mitochondrion-endoplasmic reticulum membrane tethering"/>
    <property type="evidence" value="ECO:0007669"/>
    <property type="project" value="UniProtKB-UniRule"/>
</dbReference>
<dbReference type="GO" id="GO:0015914">
    <property type="term" value="P:phospholipid transport"/>
    <property type="evidence" value="ECO:0007669"/>
    <property type="project" value="TreeGrafter"/>
</dbReference>
<dbReference type="GO" id="GO:0045040">
    <property type="term" value="P:protein insertion into mitochondrial outer membrane"/>
    <property type="evidence" value="ECO:0007669"/>
    <property type="project" value="UniProtKB-UniRule"/>
</dbReference>
<dbReference type="HAMAP" id="MF_03102">
    <property type="entry name" value="Mdm10"/>
    <property type="match status" value="1"/>
</dbReference>
<dbReference type="InterPro" id="IPR027539">
    <property type="entry name" value="Mdm10"/>
</dbReference>
<dbReference type="PANTHER" id="PTHR28035">
    <property type="entry name" value="MITOCHONDRIAL DISTRIBUTION AND MORPHOLOGY PROTEIN 10"/>
    <property type="match status" value="1"/>
</dbReference>
<dbReference type="PANTHER" id="PTHR28035:SF1">
    <property type="entry name" value="MITOCHONDRIAL DISTRIBUTION AND MORPHOLOGY PROTEIN 10"/>
    <property type="match status" value="1"/>
</dbReference>
<dbReference type="Pfam" id="PF12519">
    <property type="entry name" value="MDM10"/>
    <property type="match status" value="1"/>
</dbReference>
<gene>
    <name evidence="1" type="primary">MDM10</name>
    <name type="ORF">SCRG_05643</name>
</gene>
<organism>
    <name type="scientific">Saccharomyces cerevisiae (strain RM11-1a)</name>
    <name type="common">Baker's yeast</name>
    <dbReference type="NCBI Taxonomy" id="285006"/>
    <lineage>
        <taxon>Eukaryota</taxon>
        <taxon>Fungi</taxon>
        <taxon>Dikarya</taxon>
        <taxon>Ascomycota</taxon>
        <taxon>Saccharomycotina</taxon>
        <taxon>Saccharomycetes</taxon>
        <taxon>Saccharomycetales</taxon>
        <taxon>Saccharomycetaceae</taxon>
        <taxon>Saccharomyces</taxon>
    </lineage>
</organism>
<keyword id="KW-0472">Membrane</keyword>
<keyword id="KW-0496">Mitochondrion</keyword>
<keyword id="KW-1000">Mitochondrion outer membrane</keyword>
<keyword id="KW-0812">Transmembrane</keyword>
<keyword id="KW-1134">Transmembrane beta strand</keyword>
<comment type="function">
    <text evidence="1">Component of the ERMES/MDM complex, which serves as a molecular tether to connect the endoplasmic reticulum and mitochondria. Components of this complex are involved in the control of mitochondrial shape and protein biogenesis and may function in phospholipid exchange. MDM10 is involved in the late assembly steps of the general translocase of the mitochondrial outer membrane (TOM complex). Functions in the TOM40-specific route of the assembly of outer membrane beta-barrel proteins, including the association of TOM40 with the receptor TOM22 and small TOM proteins. Can associate with the SAM(core) complex as well as the MDM12-MMM1 complex, both involved in late steps of the major beta-barrel assembly pathway, that is responsible for biogenesis of all outer membrane beta-barrel proteins. May act as a switch that shuttles between both complexes and channels precursor proteins into the TOM40-specific pathway. Plays a role in mitochondrial morphology and in the inheritance of mitochondria.</text>
</comment>
<comment type="subunit">
    <text evidence="1">Component of the ER-mitochondria encounter structure (ERMES) or MDM complex, composed of MMM1, MDM10, MDM12 and MDM34. Associates with the mitochondrial outer membrane sorting assembly machinery SAM(core) complex, which consists of SAM35, SAM37 and SAM50, to form a SAM(holo) complex.</text>
</comment>
<comment type="subcellular location">
    <subcellularLocation>
        <location evidence="1">Mitochondrion outer membrane</location>
        <topology evidence="1">Multi-pass membrane protein</topology>
    </subcellularLocation>
    <text evidence="1">The ERMES/MDM complex localizes to a few discrete foci (around 10 per single cell), that represent mitochondria-endoplasmic reticulum junctions. These foci are often found next to mtDNA nucleoids.</text>
</comment>
<comment type="domain">
    <text>Lacks alpha-helical transmembrane segments, suggesting that it resides in the membrane via beta-sheet conformations similar to those predicted for other outer membrane proteins and porin.</text>
</comment>
<comment type="similarity">
    <text evidence="1">Belongs to the MDM10 family.</text>
</comment>